<organism>
    <name type="scientific">Rhizobium leguminosarum bv. trifolii (strain WSM2304)</name>
    <dbReference type="NCBI Taxonomy" id="395492"/>
    <lineage>
        <taxon>Bacteria</taxon>
        <taxon>Pseudomonadati</taxon>
        <taxon>Pseudomonadota</taxon>
        <taxon>Alphaproteobacteria</taxon>
        <taxon>Hyphomicrobiales</taxon>
        <taxon>Rhizobiaceae</taxon>
        <taxon>Rhizobium/Agrobacterium group</taxon>
        <taxon>Rhizobium</taxon>
    </lineage>
</organism>
<reference key="1">
    <citation type="journal article" date="2010" name="Stand. Genomic Sci.">
        <title>Complete genome sequence of Rhizobium leguminosarum bv trifolii strain WSM2304, an effective microsymbiont of the South American clover Trifolium polymorphum.</title>
        <authorList>
            <person name="Reeve W."/>
            <person name="O'Hara G."/>
            <person name="Chain P."/>
            <person name="Ardley J."/>
            <person name="Brau L."/>
            <person name="Nandesena K."/>
            <person name="Tiwari R."/>
            <person name="Malfatti S."/>
            <person name="Kiss H."/>
            <person name="Lapidus A."/>
            <person name="Copeland A."/>
            <person name="Nolan M."/>
            <person name="Land M."/>
            <person name="Ivanova N."/>
            <person name="Mavromatis K."/>
            <person name="Markowitz V."/>
            <person name="Kyrpides N."/>
            <person name="Melino V."/>
            <person name="Denton M."/>
            <person name="Yates R."/>
            <person name="Howieson J."/>
        </authorList>
    </citation>
    <scope>NUCLEOTIDE SEQUENCE [LARGE SCALE GENOMIC DNA]</scope>
    <source>
        <strain>WSM2304</strain>
    </source>
</reference>
<sequence>MSDILKKIELYKREEIAAAKAAVSLADLKAMQAGQSAPRGFYKALVAQRDAGNFGLIAEIKKASPSKGLIRPDFDPPALAKAYEAGGAACLSVLTDTPSFQGAPEFLTTARDACALPALRKDFMFETYQVHEARAWGADCILLIMASLTDDEAERLQDEAFSLGMDVLVEVHDAEEMERALKLSSPLIGINNRNLRTFEVSLTVSETLASMVPADRLLIGESGIFTHADCKRLQAVDISTFLVGESLMRKDDVTAATRALLFGEAAIAAE</sequence>
<dbReference type="EC" id="4.1.1.48" evidence="1"/>
<dbReference type="EMBL" id="CP001191">
    <property type="protein sequence ID" value="ACI55107.1"/>
    <property type="molecule type" value="Genomic_DNA"/>
</dbReference>
<dbReference type="RefSeq" id="WP_012557723.1">
    <property type="nucleotide sequence ID" value="NC_011369.1"/>
</dbReference>
<dbReference type="SMR" id="B5ZPY7"/>
<dbReference type="STRING" id="395492.Rleg2_1822"/>
<dbReference type="KEGG" id="rlt:Rleg2_1822"/>
<dbReference type="eggNOG" id="COG0134">
    <property type="taxonomic scope" value="Bacteria"/>
</dbReference>
<dbReference type="HOGENOM" id="CLU_034247_2_0_5"/>
<dbReference type="UniPathway" id="UPA00035">
    <property type="reaction ID" value="UER00043"/>
</dbReference>
<dbReference type="Proteomes" id="UP000008330">
    <property type="component" value="Chromosome"/>
</dbReference>
<dbReference type="GO" id="GO:0004425">
    <property type="term" value="F:indole-3-glycerol-phosphate synthase activity"/>
    <property type="evidence" value="ECO:0007669"/>
    <property type="project" value="UniProtKB-UniRule"/>
</dbReference>
<dbReference type="GO" id="GO:0004640">
    <property type="term" value="F:phosphoribosylanthranilate isomerase activity"/>
    <property type="evidence" value="ECO:0007669"/>
    <property type="project" value="TreeGrafter"/>
</dbReference>
<dbReference type="GO" id="GO:0000162">
    <property type="term" value="P:L-tryptophan biosynthetic process"/>
    <property type="evidence" value="ECO:0007669"/>
    <property type="project" value="UniProtKB-UniRule"/>
</dbReference>
<dbReference type="CDD" id="cd00331">
    <property type="entry name" value="IGPS"/>
    <property type="match status" value="1"/>
</dbReference>
<dbReference type="FunFam" id="3.20.20.70:FF:000024">
    <property type="entry name" value="Indole-3-glycerol phosphate synthase"/>
    <property type="match status" value="1"/>
</dbReference>
<dbReference type="Gene3D" id="3.20.20.70">
    <property type="entry name" value="Aldolase class I"/>
    <property type="match status" value="1"/>
</dbReference>
<dbReference type="HAMAP" id="MF_00134_B">
    <property type="entry name" value="IGPS_B"/>
    <property type="match status" value="1"/>
</dbReference>
<dbReference type="InterPro" id="IPR013785">
    <property type="entry name" value="Aldolase_TIM"/>
</dbReference>
<dbReference type="InterPro" id="IPR045186">
    <property type="entry name" value="Indole-3-glycerol_P_synth"/>
</dbReference>
<dbReference type="InterPro" id="IPR013798">
    <property type="entry name" value="Indole-3-glycerol_P_synth_dom"/>
</dbReference>
<dbReference type="InterPro" id="IPR001468">
    <property type="entry name" value="Indole-3-GlycerolPSynthase_CS"/>
</dbReference>
<dbReference type="InterPro" id="IPR011060">
    <property type="entry name" value="RibuloseP-bd_barrel"/>
</dbReference>
<dbReference type="NCBIfam" id="NF001370">
    <property type="entry name" value="PRK00278.1-2"/>
    <property type="match status" value="1"/>
</dbReference>
<dbReference type="NCBIfam" id="NF001373">
    <property type="entry name" value="PRK00278.1-6"/>
    <property type="match status" value="1"/>
</dbReference>
<dbReference type="NCBIfam" id="NF001377">
    <property type="entry name" value="PRK00278.2-4"/>
    <property type="match status" value="1"/>
</dbReference>
<dbReference type="PANTHER" id="PTHR22854:SF2">
    <property type="entry name" value="INDOLE-3-GLYCEROL-PHOSPHATE SYNTHASE"/>
    <property type="match status" value="1"/>
</dbReference>
<dbReference type="PANTHER" id="PTHR22854">
    <property type="entry name" value="TRYPTOPHAN BIOSYNTHESIS PROTEIN"/>
    <property type="match status" value="1"/>
</dbReference>
<dbReference type="Pfam" id="PF00218">
    <property type="entry name" value="IGPS"/>
    <property type="match status" value="1"/>
</dbReference>
<dbReference type="SUPFAM" id="SSF51366">
    <property type="entry name" value="Ribulose-phoshate binding barrel"/>
    <property type="match status" value="1"/>
</dbReference>
<dbReference type="PROSITE" id="PS00614">
    <property type="entry name" value="IGPS"/>
    <property type="match status" value="1"/>
</dbReference>
<feature type="chain" id="PRO_1000095884" description="Indole-3-glycerol phosphate synthase">
    <location>
        <begin position="1"/>
        <end position="270"/>
    </location>
</feature>
<evidence type="ECO:0000255" key="1">
    <source>
        <dbReference type="HAMAP-Rule" id="MF_00134"/>
    </source>
</evidence>
<proteinExistence type="inferred from homology"/>
<keyword id="KW-0028">Amino-acid biosynthesis</keyword>
<keyword id="KW-0057">Aromatic amino acid biosynthesis</keyword>
<keyword id="KW-0210">Decarboxylase</keyword>
<keyword id="KW-0456">Lyase</keyword>
<keyword id="KW-1185">Reference proteome</keyword>
<keyword id="KW-0822">Tryptophan biosynthesis</keyword>
<comment type="catalytic activity">
    <reaction evidence="1">
        <text>1-(2-carboxyphenylamino)-1-deoxy-D-ribulose 5-phosphate + H(+) = (1S,2R)-1-C-(indol-3-yl)glycerol 3-phosphate + CO2 + H2O</text>
        <dbReference type="Rhea" id="RHEA:23476"/>
        <dbReference type="ChEBI" id="CHEBI:15377"/>
        <dbReference type="ChEBI" id="CHEBI:15378"/>
        <dbReference type="ChEBI" id="CHEBI:16526"/>
        <dbReference type="ChEBI" id="CHEBI:58613"/>
        <dbReference type="ChEBI" id="CHEBI:58866"/>
        <dbReference type="EC" id="4.1.1.48"/>
    </reaction>
</comment>
<comment type="pathway">
    <text evidence="1">Amino-acid biosynthesis; L-tryptophan biosynthesis; L-tryptophan from chorismate: step 4/5.</text>
</comment>
<comment type="similarity">
    <text evidence="1">Belongs to the TrpC family.</text>
</comment>
<protein>
    <recommendedName>
        <fullName evidence="1">Indole-3-glycerol phosphate synthase</fullName>
        <shortName evidence="1">IGPS</shortName>
        <ecNumber evidence="1">4.1.1.48</ecNumber>
    </recommendedName>
</protein>
<accession>B5ZPY7</accession>
<gene>
    <name evidence="1" type="primary">trpC</name>
    <name type="ordered locus">Rleg2_1822</name>
</gene>
<name>TRPC_RHILW</name>